<dbReference type="EMBL" id="AAFI02000005">
    <property type="protein sequence ID" value="EAL72012.2"/>
    <property type="molecule type" value="Genomic_DNA"/>
</dbReference>
<dbReference type="RefSeq" id="XP_645879.2">
    <property type="nucleotide sequence ID" value="XM_640787.2"/>
</dbReference>
<dbReference type="SMR" id="Q55EA2"/>
<dbReference type="FunCoup" id="Q55EA2">
    <property type="interactions" value="550"/>
</dbReference>
<dbReference type="STRING" id="44689.Q55EA2"/>
<dbReference type="PaxDb" id="44689-DDB0266356"/>
<dbReference type="EnsemblProtists" id="EAL72012">
    <property type="protein sequence ID" value="EAL72012"/>
    <property type="gene ID" value="DDB_G0269324"/>
</dbReference>
<dbReference type="GeneID" id="8616819"/>
<dbReference type="KEGG" id="ddi:DDB_G0269324"/>
<dbReference type="dictyBase" id="DDB_G0269324">
    <property type="gene designation" value="gins4"/>
</dbReference>
<dbReference type="VEuPathDB" id="AmoebaDB:DDB_G0269324"/>
<dbReference type="eggNOG" id="KOG3176">
    <property type="taxonomic scope" value="Eukaryota"/>
</dbReference>
<dbReference type="HOGENOM" id="CLU_071893_3_0_1"/>
<dbReference type="InParanoid" id="Q55EA2"/>
<dbReference type="OMA" id="ILETAWI"/>
<dbReference type="PhylomeDB" id="Q55EA2"/>
<dbReference type="Reactome" id="R-DDI-176974">
    <property type="pathway name" value="Unwinding of DNA"/>
</dbReference>
<dbReference type="PRO" id="PR:Q55EA2"/>
<dbReference type="Proteomes" id="UP000002195">
    <property type="component" value="Chromosome 1"/>
</dbReference>
<dbReference type="GO" id="GO:0000811">
    <property type="term" value="C:GINS complex"/>
    <property type="evidence" value="ECO:0000250"/>
    <property type="project" value="dictyBase"/>
</dbReference>
<dbReference type="GO" id="GO:0006260">
    <property type="term" value="P:DNA replication"/>
    <property type="evidence" value="ECO:0000250"/>
    <property type="project" value="dictyBase"/>
</dbReference>
<dbReference type="GO" id="GO:0006261">
    <property type="term" value="P:DNA-templated DNA replication"/>
    <property type="evidence" value="ECO:0007669"/>
    <property type="project" value="InterPro"/>
</dbReference>
<dbReference type="GO" id="GO:0000727">
    <property type="term" value="P:double-strand break repair via break-induced replication"/>
    <property type="evidence" value="ECO:0000318"/>
    <property type="project" value="GO_Central"/>
</dbReference>
<dbReference type="CDD" id="cd11711">
    <property type="entry name" value="GINS_A_Sld5"/>
    <property type="match status" value="1"/>
</dbReference>
<dbReference type="CDD" id="cd21692">
    <property type="entry name" value="GINS_B_Sld5"/>
    <property type="match status" value="1"/>
</dbReference>
<dbReference type="FunFam" id="1.20.58.1030:FF:000011">
    <property type="entry name" value="DNA replication complex GINS protein SLD5"/>
    <property type="match status" value="1"/>
</dbReference>
<dbReference type="Gene3D" id="1.20.58.1030">
    <property type="match status" value="1"/>
</dbReference>
<dbReference type="Gene3D" id="3.40.5.60">
    <property type="match status" value="1"/>
</dbReference>
<dbReference type="InterPro" id="IPR021151">
    <property type="entry name" value="GINS_A"/>
</dbReference>
<dbReference type="InterPro" id="IPR036224">
    <property type="entry name" value="GINS_bundle-like_dom_sf"/>
</dbReference>
<dbReference type="InterPro" id="IPR008591">
    <property type="entry name" value="GINS_Sld5"/>
</dbReference>
<dbReference type="InterPro" id="IPR031633">
    <property type="entry name" value="SLD5_C"/>
</dbReference>
<dbReference type="InterPro" id="IPR038749">
    <property type="entry name" value="Sld5_GINS_A"/>
</dbReference>
<dbReference type="PANTHER" id="PTHR21206:SF0">
    <property type="entry name" value="DNA REPLICATION COMPLEX GINS PROTEIN SLD5"/>
    <property type="match status" value="1"/>
</dbReference>
<dbReference type="PANTHER" id="PTHR21206">
    <property type="entry name" value="SLD5 PROTEIN"/>
    <property type="match status" value="1"/>
</dbReference>
<dbReference type="Pfam" id="PF05916">
    <property type="entry name" value="Sld5"/>
    <property type="match status" value="1"/>
</dbReference>
<dbReference type="Pfam" id="PF16922">
    <property type="entry name" value="SLD5_C"/>
    <property type="match status" value="1"/>
</dbReference>
<dbReference type="PIRSF" id="PIRSF007764">
    <property type="entry name" value="Sld5"/>
    <property type="match status" value="1"/>
</dbReference>
<dbReference type="SUPFAM" id="SSF158573">
    <property type="entry name" value="GINS helical bundle-like"/>
    <property type="match status" value="1"/>
</dbReference>
<dbReference type="SUPFAM" id="SSF160059">
    <property type="entry name" value="PriA/YqbF domain"/>
    <property type="match status" value="1"/>
</dbReference>
<reference key="1">
    <citation type="journal article" date="2005" name="Nature">
        <title>The genome of the social amoeba Dictyostelium discoideum.</title>
        <authorList>
            <person name="Eichinger L."/>
            <person name="Pachebat J.A."/>
            <person name="Gloeckner G."/>
            <person name="Rajandream M.A."/>
            <person name="Sucgang R."/>
            <person name="Berriman M."/>
            <person name="Song J."/>
            <person name="Olsen R."/>
            <person name="Szafranski K."/>
            <person name="Xu Q."/>
            <person name="Tunggal B."/>
            <person name="Kummerfeld S."/>
            <person name="Madera M."/>
            <person name="Konfortov B.A."/>
            <person name="Rivero F."/>
            <person name="Bankier A.T."/>
            <person name="Lehmann R."/>
            <person name="Hamlin N."/>
            <person name="Davies R."/>
            <person name="Gaudet P."/>
            <person name="Fey P."/>
            <person name="Pilcher K."/>
            <person name="Chen G."/>
            <person name="Saunders D."/>
            <person name="Sodergren E.J."/>
            <person name="Davis P."/>
            <person name="Kerhornou A."/>
            <person name="Nie X."/>
            <person name="Hall N."/>
            <person name="Anjard C."/>
            <person name="Hemphill L."/>
            <person name="Bason N."/>
            <person name="Farbrother P."/>
            <person name="Desany B."/>
            <person name="Just E."/>
            <person name="Morio T."/>
            <person name="Rost R."/>
            <person name="Churcher C.M."/>
            <person name="Cooper J."/>
            <person name="Haydock S."/>
            <person name="van Driessche N."/>
            <person name="Cronin A."/>
            <person name="Goodhead I."/>
            <person name="Muzny D.M."/>
            <person name="Mourier T."/>
            <person name="Pain A."/>
            <person name="Lu M."/>
            <person name="Harper D."/>
            <person name="Lindsay R."/>
            <person name="Hauser H."/>
            <person name="James K.D."/>
            <person name="Quiles M."/>
            <person name="Madan Babu M."/>
            <person name="Saito T."/>
            <person name="Buchrieser C."/>
            <person name="Wardroper A."/>
            <person name="Felder M."/>
            <person name="Thangavelu M."/>
            <person name="Johnson D."/>
            <person name="Knights A."/>
            <person name="Loulseged H."/>
            <person name="Mungall K.L."/>
            <person name="Oliver K."/>
            <person name="Price C."/>
            <person name="Quail M.A."/>
            <person name="Urushihara H."/>
            <person name="Hernandez J."/>
            <person name="Rabbinowitsch E."/>
            <person name="Steffen D."/>
            <person name="Sanders M."/>
            <person name="Ma J."/>
            <person name="Kohara Y."/>
            <person name="Sharp S."/>
            <person name="Simmonds M.N."/>
            <person name="Spiegler S."/>
            <person name="Tivey A."/>
            <person name="Sugano S."/>
            <person name="White B."/>
            <person name="Walker D."/>
            <person name="Woodward J.R."/>
            <person name="Winckler T."/>
            <person name="Tanaka Y."/>
            <person name="Shaulsky G."/>
            <person name="Schleicher M."/>
            <person name="Weinstock G.M."/>
            <person name="Rosenthal A."/>
            <person name="Cox E.C."/>
            <person name="Chisholm R.L."/>
            <person name="Gibbs R.A."/>
            <person name="Loomis W.F."/>
            <person name="Platzer M."/>
            <person name="Kay R.R."/>
            <person name="Williams J.G."/>
            <person name="Dear P.H."/>
            <person name="Noegel A.A."/>
            <person name="Barrell B.G."/>
            <person name="Kuspa A."/>
        </authorList>
    </citation>
    <scope>NUCLEOTIDE SEQUENCE [LARGE SCALE GENOMIC DNA]</scope>
    <source>
        <strain>AX4</strain>
    </source>
</reference>
<comment type="function">
    <text evidence="1">The GINS complex plays an essential role in the initiation of DNA replication.</text>
</comment>
<comment type="subunit">
    <text evidence="1">Component of the GINS complex which is a heterotetramer of gins1, gins2, gins3 and gins4.</text>
</comment>
<comment type="subcellular location">
    <subcellularLocation>
        <location evidence="1">Nucleus</location>
    </subcellularLocation>
</comment>
<comment type="similarity">
    <text evidence="2">Belongs to the GINS4/SLD5 family.</text>
</comment>
<proteinExistence type="inferred from homology"/>
<gene>
    <name type="primary">gins4</name>
    <name type="ORF">DDB_G0269324</name>
</gene>
<accession>Q55EA2</accession>
<evidence type="ECO:0000250" key="1"/>
<evidence type="ECO:0000305" key="2"/>
<name>SLD5_DICDI</name>
<protein>
    <recommendedName>
        <fullName>DNA replication complex GINS protein SLD5</fullName>
    </recommendedName>
    <alternativeName>
        <fullName>GINS complex subunit 4</fullName>
    </alternativeName>
</protein>
<sequence>MMSGEYGDFNNTNNKELSLLDKLKKAWINEKYAPNLLNYEDVIIKEVMEKIEEKESLCASAISNINLQFTANIYEMEIERLKYIIKCYLVQRIKKIDKFYSSILLEIENDEYDSYKLLSEFEINYCQKYKALMDGYFKNTLLNSIPKDFQKMDSNSINRPFLNTFVFCKPREDLGDFLVDDETIDFKKTSIYFLKYLPIKSLVEGGKMDLI</sequence>
<feature type="chain" id="PRO_0000327630" description="DNA replication complex GINS protein SLD5">
    <location>
        <begin position="1"/>
        <end position="211"/>
    </location>
</feature>
<organism>
    <name type="scientific">Dictyostelium discoideum</name>
    <name type="common">Social amoeba</name>
    <dbReference type="NCBI Taxonomy" id="44689"/>
    <lineage>
        <taxon>Eukaryota</taxon>
        <taxon>Amoebozoa</taxon>
        <taxon>Evosea</taxon>
        <taxon>Eumycetozoa</taxon>
        <taxon>Dictyostelia</taxon>
        <taxon>Dictyosteliales</taxon>
        <taxon>Dictyosteliaceae</taxon>
        <taxon>Dictyostelium</taxon>
    </lineage>
</organism>
<keyword id="KW-0235">DNA replication</keyword>
<keyword id="KW-0539">Nucleus</keyword>
<keyword id="KW-1185">Reference proteome</keyword>